<organism>
    <name type="scientific">Dictyostelium discoideum</name>
    <name type="common">Social amoeba</name>
    <dbReference type="NCBI Taxonomy" id="44689"/>
    <lineage>
        <taxon>Eukaryota</taxon>
        <taxon>Amoebozoa</taxon>
        <taxon>Evosea</taxon>
        <taxon>Eumycetozoa</taxon>
        <taxon>Dictyostelia</taxon>
        <taxon>Dictyosteliales</taxon>
        <taxon>Dictyosteliaceae</taxon>
        <taxon>Dictyostelium</taxon>
    </lineage>
</organism>
<sequence>MEDSFKNLTIENKEQQTVTTTTTTTTTTTKKIQTLEVPLRRNGDLIEFSDSDEEYYYDDDYEEIEYDSDLSDEENEDRILGIRSSIPLNKTLQPKAQALEQKYQNKINVNSIANSISSKRVIDDDSHRALPNSVQNSIKEIKKKDDKQGVRIVDKEDRATTEQVLDPRTRLMLFKMINKGAFSEINGCISTGKEANVYHAFTPNEEERAVKVYKTSILVFKDRDRYVTGEFRFRRGYSKHNPRKMVKVWAEKEFRNLTRLKNAGIPCPTPLILRNHILVMTFIGKDGYAAPRLKDATVSQEKFGVIYLDCIKMMRTLFHKCRLVHADLSEYNMLYYKNQLYIIDVSQSVEHDHPHSLDFLRMDCSNVTDFFRKKEVNTMFIQELFEFITDLTITEDNIDQYLEKMLEKIQSRGETTDEQKIQEEVFRNAYIPRTLDQIIDLDRDMEKIERGEGRDIFYQNLTGLSKDLQNIKSKNDLINDSNENKDSDDSSSDSSEDSDDDSDSDQLNEDDEKIRKLVVIDPITKMEIRLEDMPKKDRKKFVKEMNKERRKTKIPKHIKKLTKKRKAEKFGKKK</sequence>
<dbReference type="EC" id="2.7.11.1"/>
<dbReference type="EC" id="3.6.1.-" evidence="1"/>
<dbReference type="EMBL" id="AAFI02000036">
    <property type="protein sequence ID" value="EAL67194.1"/>
    <property type="molecule type" value="Genomic_DNA"/>
</dbReference>
<dbReference type="RefSeq" id="XP_641171.1">
    <property type="nucleotide sequence ID" value="XM_636079.1"/>
</dbReference>
<dbReference type="SMR" id="Q54VD8"/>
<dbReference type="FunCoup" id="Q54VD8">
    <property type="interactions" value="838"/>
</dbReference>
<dbReference type="STRING" id="44689.Q54VD8"/>
<dbReference type="PaxDb" id="44689-DDB0216428"/>
<dbReference type="EnsemblProtists" id="EAL67194">
    <property type="protein sequence ID" value="EAL67194"/>
    <property type="gene ID" value="DDB_G0280431"/>
</dbReference>
<dbReference type="GeneID" id="8622551"/>
<dbReference type="KEGG" id="ddi:DDB_G0280431"/>
<dbReference type="dictyBase" id="DDB_G0280431">
    <property type="gene designation" value="rio1"/>
</dbReference>
<dbReference type="VEuPathDB" id="AmoebaDB:DDB_G0280431"/>
<dbReference type="eggNOG" id="KOG2270">
    <property type="taxonomic scope" value="Eukaryota"/>
</dbReference>
<dbReference type="HOGENOM" id="CLU_018693_4_3_1"/>
<dbReference type="InParanoid" id="Q54VD8"/>
<dbReference type="OMA" id="HPMSLDF"/>
<dbReference type="PhylomeDB" id="Q54VD8"/>
<dbReference type="PRO" id="PR:Q54VD8"/>
<dbReference type="Proteomes" id="UP000002195">
    <property type="component" value="Chromosome 3"/>
</dbReference>
<dbReference type="GO" id="GO:0005829">
    <property type="term" value="C:cytosol"/>
    <property type="evidence" value="ECO:0000318"/>
    <property type="project" value="GO_Central"/>
</dbReference>
<dbReference type="GO" id="GO:0030688">
    <property type="term" value="C:preribosome, small subunit precursor"/>
    <property type="evidence" value="ECO:0000318"/>
    <property type="project" value="GO_Central"/>
</dbReference>
<dbReference type="GO" id="GO:0005524">
    <property type="term" value="F:ATP binding"/>
    <property type="evidence" value="ECO:0007669"/>
    <property type="project" value="UniProtKB-KW"/>
</dbReference>
<dbReference type="GO" id="GO:0016787">
    <property type="term" value="F:hydrolase activity"/>
    <property type="evidence" value="ECO:0007669"/>
    <property type="project" value="UniProtKB-KW"/>
</dbReference>
<dbReference type="GO" id="GO:0046872">
    <property type="term" value="F:metal ion binding"/>
    <property type="evidence" value="ECO:0007669"/>
    <property type="project" value="UniProtKB-KW"/>
</dbReference>
<dbReference type="GO" id="GO:0004672">
    <property type="term" value="F:protein kinase activity"/>
    <property type="evidence" value="ECO:0000250"/>
    <property type="project" value="dictyBase"/>
</dbReference>
<dbReference type="GO" id="GO:0106310">
    <property type="term" value="F:protein serine kinase activity"/>
    <property type="evidence" value="ECO:0007669"/>
    <property type="project" value="RHEA"/>
</dbReference>
<dbReference type="GO" id="GO:0004674">
    <property type="term" value="F:protein serine/threonine kinase activity"/>
    <property type="evidence" value="ECO:0000318"/>
    <property type="project" value="GO_Central"/>
</dbReference>
<dbReference type="GO" id="GO:0030490">
    <property type="term" value="P:maturation of SSU-rRNA"/>
    <property type="evidence" value="ECO:0000318"/>
    <property type="project" value="GO_Central"/>
</dbReference>
<dbReference type="GO" id="GO:0006468">
    <property type="term" value="P:protein phosphorylation"/>
    <property type="evidence" value="ECO:0000250"/>
    <property type="project" value="dictyBase"/>
</dbReference>
<dbReference type="CDD" id="cd05147">
    <property type="entry name" value="RIO1_euk"/>
    <property type="match status" value="1"/>
</dbReference>
<dbReference type="FunFam" id="1.10.510.10:FF:000232">
    <property type="entry name" value="Serine/threonine-protein kinase RIO1"/>
    <property type="match status" value="1"/>
</dbReference>
<dbReference type="FunFam" id="3.30.200.20:FF:000148">
    <property type="entry name" value="Serine/threonine-protein kinase RIO1"/>
    <property type="match status" value="1"/>
</dbReference>
<dbReference type="Gene3D" id="3.30.200.20">
    <property type="entry name" value="Phosphorylase Kinase, domain 1"/>
    <property type="match status" value="1"/>
</dbReference>
<dbReference type="Gene3D" id="1.10.510.10">
    <property type="entry name" value="Transferase(Phosphotransferase) domain 1"/>
    <property type="match status" value="1"/>
</dbReference>
<dbReference type="InterPro" id="IPR011009">
    <property type="entry name" value="Kinase-like_dom_sf"/>
</dbReference>
<dbReference type="InterPro" id="IPR051272">
    <property type="entry name" value="RIO-type_Ser/Thr_kinase"/>
</dbReference>
<dbReference type="InterPro" id="IPR018934">
    <property type="entry name" value="RIO_dom"/>
</dbReference>
<dbReference type="InterPro" id="IPR000687">
    <property type="entry name" value="RIO_kinase"/>
</dbReference>
<dbReference type="InterPro" id="IPR018935">
    <property type="entry name" value="RIO_kinase_CS"/>
</dbReference>
<dbReference type="InterPro" id="IPR017407">
    <property type="entry name" value="Ser/Thr_kinase_Rio1"/>
</dbReference>
<dbReference type="PANTHER" id="PTHR45723">
    <property type="entry name" value="SERINE/THREONINE-PROTEIN KINASE RIO1"/>
    <property type="match status" value="1"/>
</dbReference>
<dbReference type="Pfam" id="PF01163">
    <property type="entry name" value="RIO1"/>
    <property type="match status" value="1"/>
</dbReference>
<dbReference type="PIRSF" id="PIRSF038147">
    <property type="entry name" value="Ser/Thr_PK_RIO1"/>
    <property type="match status" value="1"/>
</dbReference>
<dbReference type="SMART" id="SM00090">
    <property type="entry name" value="RIO"/>
    <property type="match status" value="1"/>
</dbReference>
<dbReference type="SUPFAM" id="SSF56112">
    <property type="entry name" value="Protein kinase-like (PK-like)"/>
    <property type="match status" value="1"/>
</dbReference>
<dbReference type="PROSITE" id="PS01245">
    <property type="entry name" value="RIO1"/>
    <property type="match status" value="1"/>
</dbReference>
<protein>
    <recommendedName>
        <fullName>Serine/threonine-protein kinase rio1</fullName>
        <ecNumber>2.7.11.1</ecNumber>
        <ecNumber evidence="1">3.6.1.-</ecNumber>
    </recommendedName>
</protein>
<reference key="1">
    <citation type="journal article" date="2005" name="Nature">
        <title>The genome of the social amoeba Dictyostelium discoideum.</title>
        <authorList>
            <person name="Eichinger L."/>
            <person name="Pachebat J.A."/>
            <person name="Gloeckner G."/>
            <person name="Rajandream M.A."/>
            <person name="Sucgang R."/>
            <person name="Berriman M."/>
            <person name="Song J."/>
            <person name="Olsen R."/>
            <person name="Szafranski K."/>
            <person name="Xu Q."/>
            <person name="Tunggal B."/>
            <person name="Kummerfeld S."/>
            <person name="Madera M."/>
            <person name="Konfortov B.A."/>
            <person name="Rivero F."/>
            <person name="Bankier A.T."/>
            <person name="Lehmann R."/>
            <person name="Hamlin N."/>
            <person name="Davies R."/>
            <person name="Gaudet P."/>
            <person name="Fey P."/>
            <person name="Pilcher K."/>
            <person name="Chen G."/>
            <person name="Saunders D."/>
            <person name="Sodergren E.J."/>
            <person name="Davis P."/>
            <person name="Kerhornou A."/>
            <person name="Nie X."/>
            <person name="Hall N."/>
            <person name="Anjard C."/>
            <person name="Hemphill L."/>
            <person name="Bason N."/>
            <person name="Farbrother P."/>
            <person name="Desany B."/>
            <person name="Just E."/>
            <person name="Morio T."/>
            <person name="Rost R."/>
            <person name="Churcher C.M."/>
            <person name="Cooper J."/>
            <person name="Haydock S."/>
            <person name="van Driessche N."/>
            <person name="Cronin A."/>
            <person name="Goodhead I."/>
            <person name="Muzny D.M."/>
            <person name="Mourier T."/>
            <person name="Pain A."/>
            <person name="Lu M."/>
            <person name="Harper D."/>
            <person name="Lindsay R."/>
            <person name="Hauser H."/>
            <person name="James K.D."/>
            <person name="Quiles M."/>
            <person name="Madan Babu M."/>
            <person name="Saito T."/>
            <person name="Buchrieser C."/>
            <person name="Wardroper A."/>
            <person name="Felder M."/>
            <person name="Thangavelu M."/>
            <person name="Johnson D."/>
            <person name="Knights A."/>
            <person name="Loulseged H."/>
            <person name="Mungall K.L."/>
            <person name="Oliver K."/>
            <person name="Price C."/>
            <person name="Quail M.A."/>
            <person name="Urushihara H."/>
            <person name="Hernandez J."/>
            <person name="Rabbinowitsch E."/>
            <person name="Steffen D."/>
            <person name="Sanders M."/>
            <person name="Ma J."/>
            <person name="Kohara Y."/>
            <person name="Sharp S."/>
            <person name="Simmonds M.N."/>
            <person name="Spiegler S."/>
            <person name="Tivey A."/>
            <person name="Sugano S."/>
            <person name="White B."/>
            <person name="Walker D."/>
            <person name="Woodward J.R."/>
            <person name="Winckler T."/>
            <person name="Tanaka Y."/>
            <person name="Shaulsky G."/>
            <person name="Schleicher M."/>
            <person name="Weinstock G.M."/>
            <person name="Rosenthal A."/>
            <person name="Cox E.C."/>
            <person name="Chisholm R.L."/>
            <person name="Gibbs R.A."/>
            <person name="Loomis W.F."/>
            <person name="Platzer M."/>
            <person name="Kay R.R."/>
            <person name="Williams J.G."/>
            <person name="Dear P.H."/>
            <person name="Noegel A.A."/>
            <person name="Barrell B.G."/>
            <person name="Kuspa A."/>
        </authorList>
    </citation>
    <scope>NUCLEOTIDE SEQUENCE [LARGE SCALE GENOMIC DNA]</scope>
    <source>
        <strain>AX4</strain>
    </source>
</reference>
<keyword id="KW-0067">ATP-binding</keyword>
<keyword id="KW-0963">Cytoplasm</keyword>
<keyword id="KW-0378">Hydrolase</keyword>
<keyword id="KW-0418">Kinase</keyword>
<keyword id="KW-0460">Magnesium</keyword>
<keyword id="KW-0479">Metal-binding</keyword>
<keyword id="KW-0547">Nucleotide-binding</keyword>
<keyword id="KW-1185">Reference proteome</keyword>
<keyword id="KW-0690">Ribosome biogenesis</keyword>
<keyword id="KW-0723">Serine/threonine-protein kinase</keyword>
<keyword id="KW-0808">Transferase</keyword>
<comment type="function">
    <text evidence="3 4">Required for the final endonucleolytic cleavage at site D converting 20S pre-rRNA into the mature 18S rRNA. Required for the final steps of cytoplasmic maturation of the 40S ribosomal subunit. Despite the protein kinase domain is proposed to act predominantly as an ATPase (By similarity).</text>
</comment>
<comment type="catalytic activity">
    <reaction>
        <text>L-seryl-[protein] + ATP = O-phospho-L-seryl-[protein] + ADP + H(+)</text>
        <dbReference type="Rhea" id="RHEA:17989"/>
        <dbReference type="Rhea" id="RHEA-COMP:9863"/>
        <dbReference type="Rhea" id="RHEA-COMP:11604"/>
        <dbReference type="ChEBI" id="CHEBI:15378"/>
        <dbReference type="ChEBI" id="CHEBI:29999"/>
        <dbReference type="ChEBI" id="CHEBI:30616"/>
        <dbReference type="ChEBI" id="CHEBI:83421"/>
        <dbReference type="ChEBI" id="CHEBI:456216"/>
        <dbReference type="EC" id="2.7.11.1"/>
    </reaction>
</comment>
<comment type="catalytic activity">
    <reaction>
        <text>L-threonyl-[protein] + ATP = O-phospho-L-threonyl-[protein] + ADP + H(+)</text>
        <dbReference type="Rhea" id="RHEA:46608"/>
        <dbReference type="Rhea" id="RHEA-COMP:11060"/>
        <dbReference type="Rhea" id="RHEA-COMP:11605"/>
        <dbReference type="ChEBI" id="CHEBI:15378"/>
        <dbReference type="ChEBI" id="CHEBI:30013"/>
        <dbReference type="ChEBI" id="CHEBI:30616"/>
        <dbReference type="ChEBI" id="CHEBI:61977"/>
        <dbReference type="ChEBI" id="CHEBI:456216"/>
        <dbReference type="EC" id="2.7.11.1"/>
    </reaction>
</comment>
<comment type="catalytic activity">
    <reaction evidence="1">
        <text>ATP + H2O = ADP + phosphate + H(+)</text>
        <dbReference type="Rhea" id="RHEA:13065"/>
        <dbReference type="ChEBI" id="CHEBI:15377"/>
        <dbReference type="ChEBI" id="CHEBI:15378"/>
        <dbReference type="ChEBI" id="CHEBI:30616"/>
        <dbReference type="ChEBI" id="CHEBI:43474"/>
        <dbReference type="ChEBI" id="CHEBI:456216"/>
    </reaction>
</comment>
<comment type="cofactor">
    <cofactor evidence="6">
        <name>Mg(2+)</name>
        <dbReference type="ChEBI" id="CHEBI:18420"/>
    </cofactor>
</comment>
<comment type="subcellular location">
    <subcellularLocation>
        <location evidence="2 3">Cytoplasm</location>
    </subcellularLocation>
</comment>
<comment type="similarity">
    <text evidence="6">Belongs to the protein kinase superfamily. RIO-type Ser/Thr kinase family.</text>
</comment>
<evidence type="ECO:0000250" key="1">
    <source>
        <dbReference type="UniProtKB" id="G0S3J5"/>
    </source>
</evidence>
<evidence type="ECO:0000250" key="2">
    <source>
        <dbReference type="UniProtKB" id="O42650"/>
    </source>
</evidence>
<evidence type="ECO:0000250" key="3">
    <source>
        <dbReference type="UniProtKB" id="Q12196"/>
    </source>
</evidence>
<evidence type="ECO:0000250" key="4">
    <source>
        <dbReference type="UniProtKB" id="Q9BRS2"/>
    </source>
</evidence>
<evidence type="ECO:0000256" key="5">
    <source>
        <dbReference type="SAM" id="MobiDB-lite"/>
    </source>
</evidence>
<evidence type="ECO:0000305" key="6"/>
<accession>Q54VD8</accession>
<proteinExistence type="inferred from homology"/>
<feature type="chain" id="PRO_0000373993" description="Serine/threonine-protein kinase rio1">
    <location>
        <begin position="1"/>
        <end position="574"/>
    </location>
</feature>
<feature type="domain" description="Protein kinase">
    <location>
        <begin position="171"/>
        <end position="462"/>
    </location>
</feature>
<feature type="region of interest" description="Disordered" evidence="5">
    <location>
        <begin position="474"/>
        <end position="513"/>
    </location>
</feature>
<feature type="region of interest" description="Disordered" evidence="5">
    <location>
        <begin position="538"/>
        <end position="574"/>
    </location>
</feature>
<feature type="compositionally biased region" description="Basic and acidic residues" evidence="5">
    <location>
        <begin position="474"/>
        <end position="488"/>
    </location>
</feature>
<feature type="compositionally biased region" description="Acidic residues" evidence="5">
    <location>
        <begin position="489"/>
        <end position="511"/>
    </location>
</feature>
<feature type="compositionally biased region" description="Basic residues" evidence="5">
    <location>
        <begin position="548"/>
        <end position="574"/>
    </location>
</feature>
<feature type="active site" description="Proton acceptor" evidence="4">
    <location>
        <position position="327"/>
    </location>
</feature>
<feature type="active site" description="4-aspartylphosphate intermediate" evidence="4">
    <location>
        <position position="344"/>
    </location>
</feature>
<feature type="binding site" evidence="4">
    <location>
        <position position="211"/>
    </location>
    <ligand>
        <name>ATP</name>
        <dbReference type="ChEBI" id="CHEBI:30616"/>
    </ligand>
</feature>
<feature type="binding site" evidence="4">
    <location>
        <position position="283"/>
    </location>
    <ligand>
        <name>ATP</name>
        <dbReference type="ChEBI" id="CHEBI:30616"/>
    </ligand>
</feature>
<feature type="binding site" evidence="4">
    <location>
        <position position="332"/>
    </location>
    <ligand>
        <name>Mg(2+)</name>
        <dbReference type="ChEBI" id="CHEBI:18420"/>
    </ligand>
</feature>
<feature type="binding site" evidence="4">
    <location>
        <position position="344"/>
    </location>
    <ligand>
        <name>Mg(2+)</name>
        <dbReference type="ChEBI" id="CHEBI:18420"/>
    </ligand>
</feature>
<name>RIO1_DICDI</name>
<gene>
    <name type="primary">rio1</name>
    <name type="ORF">DDB_G0280431</name>
</gene>